<feature type="signal peptide" evidence="5">
    <location>
        <begin position="1"/>
        <end position="24"/>
    </location>
</feature>
<feature type="chain" id="PRO_0000292594" description="Protein disulfide-isomerase A3">
    <location>
        <begin position="25"/>
        <end position="505"/>
    </location>
</feature>
<feature type="domain" description="Thioredoxin 1" evidence="6">
    <location>
        <begin position="25"/>
        <end position="133"/>
    </location>
</feature>
<feature type="domain" description="Thioredoxin 2" evidence="6">
    <location>
        <begin position="343"/>
        <end position="485"/>
    </location>
</feature>
<feature type="region of interest" description="Disordered" evidence="7">
    <location>
        <begin position="484"/>
        <end position="505"/>
    </location>
</feature>
<feature type="short sequence motif" description="Prevents secretion from ER" evidence="2">
    <location>
        <begin position="502"/>
        <end position="505"/>
    </location>
</feature>
<feature type="compositionally biased region" description="Basic and acidic residues" evidence="7">
    <location>
        <begin position="491"/>
        <end position="505"/>
    </location>
</feature>
<feature type="active site" description="Nucleophile" evidence="4">
    <location>
        <position position="57"/>
    </location>
</feature>
<feature type="active site" description="Nucleophile" evidence="4">
    <location>
        <position position="60"/>
    </location>
</feature>
<feature type="active site" description="Nucleophile" evidence="4">
    <location>
        <position position="406"/>
    </location>
</feature>
<feature type="active site" description="Nucleophile" evidence="4">
    <location>
        <position position="409"/>
    </location>
</feature>
<feature type="site" description="Contributes to redox potential value" evidence="1">
    <location>
        <position position="58"/>
    </location>
</feature>
<feature type="site" description="Contributes to redox potential value" evidence="1">
    <location>
        <position position="59"/>
    </location>
</feature>
<feature type="site" description="Lowers pKa of C-terminal Cys of first active site" evidence="1">
    <location>
        <position position="119"/>
    </location>
</feature>
<feature type="site" description="Contributes to redox potential value" evidence="1">
    <location>
        <position position="407"/>
    </location>
</feature>
<feature type="site" description="Contributes to redox potential value" evidence="1">
    <location>
        <position position="408"/>
    </location>
</feature>
<feature type="site" description="Lowers pKa of C-terminal Cys of second active site" evidence="1">
    <location>
        <position position="471"/>
    </location>
</feature>
<feature type="modified residue" description="N6-methyllysine" evidence="4">
    <location>
        <position position="61"/>
    </location>
</feature>
<feature type="modified residue" description="N6-succinyllysine" evidence="3">
    <location>
        <position position="129"/>
    </location>
</feature>
<feature type="modified residue" description="N6-acetyllysine" evidence="3">
    <location>
        <position position="152"/>
    </location>
</feature>
<feature type="modified residue" description="N6-succinyllysine" evidence="3">
    <location>
        <position position="218"/>
    </location>
</feature>
<feature type="modified residue" description="N6-acetyllysine" evidence="3">
    <location>
        <position position="252"/>
    </location>
</feature>
<feature type="modified residue" description="Phosphothreonine" evidence="4">
    <location>
        <position position="319"/>
    </location>
</feature>
<feature type="modified residue" description="N6-acetyllysine" evidence="3">
    <location>
        <position position="362"/>
    </location>
</feature>
<feature type="modified residue" description="N6-acetyllysine" evidence="3">
    <location>
        <position position="494"/>
    </location>
</feature>
<feature type="disulfide bond" description="Redox-active; reversible" evidence="4 6">
    <location>
        <begin position="57"/>
        <end position="60"/>
    </location>
</feature>
<feature type="disulfide bond" description="Interchain (with TAPBP); in linked form; reversible" evidence="4">
    <location>
        <position position="57"/>
    </location>
</feature>
<feature type="disulfide bond" evidence="4">
    <location>
        <begin position="85"/>
        <end position="92"/>
    </location>
</feature>
<feature type="disulfide bond" description="Redox-active" evidence="4 6">
    <location>
        <begin position="406"/>
        <end position="409"/>
    </location>
</feature>
<dbReference type="EC" id="5.3.4.1" evidence="4"/>
<dbReference type="EMBL" id="AY901964">
    <property type="protein sequence ID" value="AAX86984.1"/>
    <property type="molecule type" value="mRNA"/>
</dbReference>
<dbReference type="BMRB" id="Q4VIT4"/>
<dbReference type="SMR" id="Q4VIT4"/>
<dbReference type="IntAct" id="Q4VIT4">
    <property type="interactions" value="1"/>
</dbReference>
<dbReference type="GO" id="GO:0009986">
    <property type="term" value="C:cell surface"/>
    <property type="evidence" value="ECO:0007669"/>
    <property type="project" value="TreeGrafter"/>
</dbReference>
<dbReference type="GO" id="GO:0005783">
    <property type="term" value="C:endoplasmic reticulum"/>
    <property type="evidence" value="ECO:0000250"/>
    <property type="project" value="UniProtKB"/>
</dbReference>
<dbReference type="GO" id="GO:0005788">
    <property type="term" value="C:endoplasmic reticulum lumen"/>
    <property type="evidence" value="ECO:0007669"/>
    <property type="project" value="UniProtKB-SubCell"/>
</dbReference>
<dbReference type="GO" id="GO:0042470">
    <property type="term" value="C:melanosome"/>
    <property type="evidence" value="ECO:0007669"/>
    <property type="project" value="UniProtKB-SubCell"/>
</dbReference>
<dbReference type="GO" id="GO:0003756">
    <property type="term" value="F:protein disulfide isomerase activity"/>
    <property type="evidence" value="ECO:0007669"/>
    <property type="project" value="UniProtKB-EC"/>
</dbReference>
<dbReference type="GO" id="GO:0002250">
    <property type="term" value="P:adaptive immune response"/>
    <property type="evidence" value="ECO:0007669"/>
    <property type="project" value="UniProtKB-KW"/>
</dbReference>
<dbReference type="GO" id="GO:0006457">
    <property type="term" value="P:protein folding"/>
    <property type="evidence" value="ECO:0007669"/>
    <property type="project" value="TreeGrafter"/>
</dbReference>
<dbReference type="GO" id="GO:0034976">
    <property type="term" value="P:response to endoplasmic reticulum stress"/>
    <property type="evidence" value="ECO:0007669"/>
    <property type="project" value="TreeGrafter"/>
</dbReference>
<dbReference type="CDD" id="cd02995">
    <property type="entry name" value="PDI_a_PDI_a'_C"/>
    <property type="match status" value="1"/>
</dbReference>
<dbReference type="CDD" id="cd03073">
    <property type="entry name" value="PDI_b'_ERp72_ERp57"/>
    <property type="match status" value="1"/>
</dbReference>
<dbReference type="CDD" id="cd03069">
    <property type="entry name" value="PDI_b_ERp57"/>
    <property type="match status" value="1"/>
</dbReference>
<dbReference type="FunFam" id="3.40.30.10:FF:000045">
    <property type="entry name" value="Disulfide-isomerase A3"/>
    <property type="match status" value="1"/>
</dbReference>
<dbReference type="FunFam" id="3.40.30.10:FF:000054">
    <property type="entry name" value="Disulfide-isomerase A3"/>
    <property type="match status" value="1"/>
</dbReference>
<dbReference type="FunFam" id="3.40.30.10:FF:000077">
    <property type="entry name" value="Protein disulfide-isomerase"/>
    <property type="match status" value="1"/>
</dbReference>
<dbReference type="FunFam" id="3.40.30.10:FF:000017">
    <property type="entry name" value="Protein disulfide-isomerase A4"/>
    <property type="match status" value="1"/>
</dbReference>
<dbReference type="Gene3D" id="3.40.30.10">
    <property type="entry name" value="Glutaredoxin"/>
    <property type="match status" value="4"/>
</dbReference>
<dbReference type="InterPro" id="IPR005788">
    <property type="entry name" value="PDI_thioredoxin-like_dom"/>
</dbReference>
<dbReference type="InterPro" id="IPR041868">
    <property type="entry name" value="PDIA3_PDI_b"/>
</dbReference>
<dbReference type="InterPro" id="IPR005792">
    <property type="entry name" value="Prot_disulphide_isomerase"/>
</dbReference>
<dbReference type="InterPro" id="IPR036249">
    <property type="entry name" value="Thioredoxin-like_sf"/>
</dbReference>
<dbReference type="InterPro" id="IPR017937">
    <property type="entry name" value="Thioredoxin_CS"/>
</dbReference>
<dbReference type="InterPro" id="IPR013766">
    <property type="entry name" value="Thioredoxin_domain"/>
</dbReference>
<dbReference type="NCBIfam" id="TIGR01130">
    <property type="entry name" value="ER_PDI_fam"/>
    <property type="match status" value="1"/>
</dbReference>
<dbReference type="NCBIfam" id="TIGR01126">
    <property type="entry name" value="pdi_dom"/>
    <property type="match status" value="2"/>
</dbReference>
<dbReference type="PANTHER" id="PTHR18929">
    <property type="entry name" value="PROTEIN DISULFIDE ISOMERASE"/>
    <property type="match status" value="1"/>
</dbReference>
<dbReference type="PANTHER" id="PTHR18929:SF132">
    <property type="entry name" value="PROTEIN DISULFIDE-ISOMERASE A3"/>
    <property type="match status" value="1"/>
</dbReference>
<dbReference type="Pfam" id="PF00085">
    <property type="entry name" value="Thioredoxin"/>
    <property type="match status" value="2"/>
</dbReference>
<dbReference type="Pfam" id="PF13848">
    <property type="entry name" value="Thioredoxin_6"/>
    <property type="match status" value="1"/>
</dbReference>
<dbReference type="PRINTS" id="PR00421">
    <property type="entry name" value="THIOREDOXIN"/>
</dbReference>
<dbReference type="SUPFAM" id="SSF52833">
    <property type="entry name" value="Thioredoxin-like"/>
    <property type="match status" value="4"/>
</dbReference>
<dbReference type="PROSITE" id="PS00194">
    <property type="entry name" value="THIOREDOXIN_1"/>
    <property type="match status" value="2"/>
</dbReference>
<dbReference type="PROSITE" id="PS51352">
    <property type="entry name" value="THIOREDOXIN_2"/>
    <property type="match status" value="2"/>
</dbReference>
<keyword id="KW-0007">Acetylation</keyword>
<keyword id="KW-1064">Adaptive immunity</keyword>
<keyword id="KW-1015">Disulfide bond</keyword>
<keyword id="KW-0256">Endoplasmic reticulum</keyword>
<keyword id="KW-0391">Immunity</keyword>
<keyword id="KW-0413">Isomerase</keyword>
<keyword id="KW-0488">Methylation</keyword>
<keyword id="KW-0597">Phosphoprotein</keyword>
<keyword id="KW-0676">Redox-active center</keyword>
<keyword id="KW-0677">Repeat</keyword>
<keyword id="KW-0732">Signal</keyword>
<gene>
    <name type="primary">PDIA3</name>
    <name type="synonym">ERP57</name>
</gene>
<name>PDIA3_CHLAE</name>
<proteinExistence type="evidence at protein level"/>
<reference key="1">
    <citation type="journal article" date="2005" name="J. Immunol.">
        <title>A mutant cell with a novel defect in MHC class I quality control.</title>
        <authorList>
            <person name="York I.A."/>
            <person name="Grant E.P."/>
            <person name="Dahl A.M."/>
            <person name="Rock K.L."/>
        </authorList>
    </citation>
    <scope>NUCLEOTIDE SEQUENCE [MRNA]</scope>
</reference>
<organism>
    <name type="scientific">Chlorocebus aethiops</name>
    <name type="common">Green monkey</name>
    <name type="synonym">Cercopithecus aethiops</name>
    <dbReference type="NCBI Taxonomy" id="9534"/>
    <lineage>
        <taxon>Eukaryota</taxon>
        <taxon>Metazoa</taxon>
        <taxon>Chordata</taxon>
        <taxon>Craniata</taxon>
        <taxon>Vertebrata</taxon>
        <taxon>Euteleostomi</taxon>
        <taxon>Mammalia</taxon>
        <taxon>Eutheria</taxon>
        <taxon>Euarchontoglires</taxon>
        <taxon>Primates</taxon>
        <taxon>Haplorrhini</taxon>
        <taxon>Catarrhini</taxon>
        <taxon>Cercopithecidae</taxon>
        <taxon>Cercopithecinae</taxon>
        <taxon>Chlorocebus</taxon>
    </lineage>
</organism>
<sequence>MRLRRLALFPGVALLLAAARLAAASDVLELTDDNFESRVSDTGSAGLMLVEFFAPWCGHCKRLAPEYEAAATRLKGIVPLAKVDCTANTNTCNKYGVSGYPTLKIFRDGEEAGAYDGPRTADGIVSHLKKQAGPASVPLRTEEEFKKFISDKDASVVGFFDDLFSEAHSEFLKAASNLRDNYRFAHTNVKSLVNEYDDNGEGIILFRPSHLTNKFEDKTVAYTEQKMTSGKIKKFIQENIFGICPHMTEDNKDLIQGKDLLIAYYDVDYEKNAKGSNYWRNRVMMVAKKFLDAGHKLNFAVASRKTFSHELSDFGLESTAGEIPVVAIRTAKGEKFVMQEEFSRDGKALERFLQDYFDGNLKRYLKSEPIPESNDGPVKVVVAENFDEIVNNENKDVLIEFYAPWCGHCKNLEPKYKELGEKLSKDPNIVIAKMDATANDVPSPYEVRGFPTIYFSPANKKLNPKKYEGGRELSDFISYLQREATNPPVIQEEKPKKKKKAQEDL</sequence>
<accession>Q4VIT4</accession>
<evidence type="ECO:0000250" key="1"/>
<evidence type="ECO:0000250" key="2">
    <source>
        <dbReference type="UniProtKB" id="P11598"/>
    </source>
</evidence>
<evidence type="ECO:0000250" key="3">
    <source>
        <dbReference type="UniProtKB" id="P27773"/>
    </source>
</evidence>
<evidence type="ECO:0000250" key="4">
    <source>
        <dbReference type="UniProtKB" id="P30101"/>
    </source>
</evidence>
<evidence type="ECO:0000255" key="5"/>
<evidence type="ECO:0000255" key="6">
    <source>
        <dbReference type="PROSITE-ProRule" id="PRU00691"/>
    </source>
</evidence>
<evidence type="ECO:0000256" key="7">
    <source>
        <dbReference type="SAM" id="MobiDB-lite"/>
    </source>
</evidence>
<evidence type="ECO:0000305" key="8"/>
<protein>
    <recommendedName>
        <fullName>Protein disulfide-isomerase A3</fullName>
        <ecNumber evidence="4">5.3.4.1</ecNumber>
    </recommendedName>
    <alternativeName>
        <fullName>Endoplasmic reticulum resident protein 57</fullName>
        <shortName>ER protein 57</shortName>
        <shortName>ERp57</shortName>
    </alternativeName>
    <alternativeName>
        <fullName>Endoplasmic reticulum resident protein 60</fullName>
        <shortName>ER protein 60</shortName>
        <shortName>ERp60</shortName>
    </alternativeName>
</protein>
<comment type="function">
    <text evidence="4">Protein disulfide isomerase that catalyzes the formation, isomerization, and reduction or oxidation of disulfide bonds in client proteins and functions as a protein folding chaperone. Core component of the major histocompatibility complex class I (MHC I) peptide loading complex where it functions as an essential folding chaperone for TAPBP. Through TAPBP, assists the dynamic assembly of the MHC I complex with high affinity antigens in the endoplasmic reticulum. Therefore, plays a crucial role in the presentation of antigens to cytotoxic T cells in adaptive immunity.</text>
</comment>
<comment type="catalytic activity">
    <reaction evidence="4">
        <text>Catalyzes the rearrangement of -S-S- bonds in proteins.</text>
        <dbReference type="EC" id="5.3.4.1"/>
    </reaction>
</comment>
<comment type="subunit">
    <text evidence="3 4">Part of the major histocompatibility complex class I (MHC I) peptide loading complex composed of TAP1, TAP2, B2M, MHC heavy chain, TAPBP, PDIA3, and CALR. Interacts with ERP27 and CANX. Interacts with SERPINA2 and with SERPINA1 (By similarity). Interacts with ATP2A2 (By similarity).</text>
</comment>
<comment type="interaction">
    <interactant intactId="EBI-22054129">
        <id>Q4VIT4</id>
    </interactant>
    <interactant intactId="EBI-11614052">
        <id>P55157</id>
        <label>MTTP</label>
    </interactant>
    <organismsDiffer>true</organismsDiffer>
    <experiments>5</experiments>
</comment>
<comment type="subcellular location">
    <subcellularLocation>
        <location evidence="4">Endoplasmic reticulum</location>
    </subcellularLocation>
    <subcellularLocation>
        <location evidence="2">Endoplasmic reticulum lumen</location>
    </subcellularLocation>
    <subcellularLocation>
        <location evidence="4">Melanosome</location>
    </subcellularLocation>
</comment>
<comment type="PTM">
    <text evidence="4">Within the major histocompatibility complex class I (MHC I) peptide loading complex forms reversible disulfide-linked heterodimers with TAPBP as part of its protein folding chaperone activity. This is essential to assist the dynamic assembly of the MHC I complex with high affinity antigens in the endoplasmic reticulum.</text>
</comment>
<comment type="PTM">
    <text evidence="3">Phosphorylated.</text>
</comment>
<comment type="similarity">
    <text evidence="8">Belongs to the protein disulfide isomerase family.</text>
</comment>